<sequence>MKRTYQPSKIRRQRKHGFRHRMSTKNGRRVLAARRRKGRKVLSA</sequence>
<dbReference type="EMBL" id="AE009949">
    <property type="protein sequence ID" value="AAL97017.1"/>
    <property type="molecule type" value="Genomic_DNA"/>
</dbReference>
<dbReference type="RefSeq" id="WP_002885866.1">
    <property type="nucleotide sequence ID" value="NC_003485.1"/>
</dbReference>
<dbReference type="SMR" id="P66260"/>
<dbReference type="GeneID" id="93923177"/>
<dbReference type="KEGG" id="spm:spyM18_0232"/>
<dbReference type="HOGENOM" id="CLU_129938_2_0_9"/>
<dbReference type="GO" id="GO:1990904">
    <property type="term" value="C:ribonucleoprotein complex"/>
    <property type="evidence" value="ECO:0007669"/>
    <property type="project" value="UniProtKB-KW"/>
</dbReference>
<dbReference type="GO" id="GO:0005840">
    <property type="term" value="C:ribosome"/>
    <property type="evidence" value="ECO:0007669"/>
    <property type="project" value="UniProtKB-KW"/>
</dbReference>
<dbReference type="GO" id="GO:0003735">
    <property type="term" value="F:structural constituent of ribosome"/>
    <property type="evidence" value="ECO:0007669"/>
    <property type="project" value="InterPro"/>
</dbReference>
<dbReference type="GO" id="GO:0006412">
    <property type="term" value="P:translation"/>
    <property type="evidence" value="ECO:0007669"/>
    <property type="project" value="UniProtKB-UniRule"/>
</dbReference>
<dbReference type="FunFam" id="1.10.287.3980:FF:000001">
    <property type="entry name" value="Mitochondrial ribosomal protein L34"/>
    <property type="match status" value="1"/>
</dbReference>
<dbReference type="Gene3D" id="1.10.287.3980">
    <property type="match status" value="1"/>
</dbReference>
<dbReference type="HAMAP" id="MF_00391">
    <property type="entry name" value="Ribosomal_bL34"/>
    <property type="match status" value="1"/>
</dbReference>
<dbReference type="InterPro" id="IPR000271">
    <property type="entry name" value="Ribosomal_bL34"/>
</dbReference>
<dbReference type="InterPro" id="IPR020939">
    <property type="entry name" value="Ribosomal_bL34_CS"/>
</dbReference>
<dbReference type="NCBIfam" id="TIGR01030">
    <property type="entry name" value="rpmH_bact"/>
    <property type="match status" value="1"/>
</dbReference>
<dbReference type="PANTHER" id="PTHR14503:SF4">
    <property type="entry name" value="LARGE RIBOSOMAL SUBUNIT PROTEIN BL34M"/>
    <property type="match status" value="1"/>
</dbReference>
<dbReference type="PANTHER" id="PTHR14503">
    <property type="entry name" value="MITOCHONDRIAL RIBOSOMAL PROTEIN 34 FAMILY MEMBER"/>
    <property type="match status" value="1"/>
</dbReference>
<dbReference type="Pfam" id="PF00468">
    <property type="entry name" value="Ribosomal_L34"/>
    <property type="match status" value="1"/>
</dbReference>
<dbReference type="PROSITE" id="PS00784">
    <property type="entry name" value="RIBOSOMAL_L34"/>
    <property type="match status" value="1"/>
</dbReference>
<keyword id="KW-0687">Ribonucleoprotein</keyword>
<keyword id="KW-0689">Ribosomal protein</keyword>
<feature type="chain" id="PRO_0000187479" description="Large ribosomal subunit protein bL34">
    <location>
        <begin position="1"/>
        <end position="44"/>
    </location>
</feature>
<feature type="region of interest" description="Disordered" evidence="2">
    <location>
        <begin position="1"/>
        <end position="44"/>
    </location>
</feature>
<protein>
    <recommendedName>
        <fullName evidence="1">Large ribosomal subunit protein bL34</fullName>
    </recommendedName>
    <alternativeName>
        <fullName evidence="3">50S ribosomal protein L34</fullName>
    </alternativeName>
</protein>
<comment type="similarity">
    <text evidence="1">Belongs to the bacterial ribosomal protein bL34 family.</text>
</comment>
<organism>
    <name type="scientific">Streptococcus pyogenes serotype M18 (strain MGAS8232)</name>
    <dbReference type="NCBI Taxonomy" id="186103"/>
    <lineage>
        <taxon>Bacteria</taxon>
        <taxon>Bacillati</taxon>
        <taxon>Bacillota</taxon>
        <taxon>Bacilli</taxon>
        <taxon>Lactobacillales</taxon>
        <taxon>Streptococcaceae</taxon>
        <taxon>Streptococcus</taxon>
    </lineage>
</organism>
<proteinExistence type="inferred from homology"/>
<name>RL34_STRP8</name>
<evidence type="ECO:0000255" key="1">
    <source>
        <dbReference type="HAMAP-Rule" id="MF_00391"/>
    </source>
</evidence>
<evidence type="ECO:0000256" key="2">
    <source>
        <dbReference type="SAM" id="MobiDB-lite"/>
    </source>
</evidence>
<evidence type="ECO:0000305" key="3"/>
<reference key="1">
    <citation type="journal article" date="2002" name="Proc. Natl. Acad. Sci. U.S.A.">
        <title>Genome sequence and comparative microarray analysis of serotype M18 group A Streptococcus strains associated with acute rheumatic fever outbreaks.</title>
        <authorList>
            <person name="Smoot J.C."/>
            <person name="Barbian K.D."/>
            <person name="Van Gompel J.J."/>
            <person name="Smoot L.M."/>
            <person name="Chaussee M.S."/>
            <person name="Sylva G.L."/>
            <person name="Sturdevant D.E."/>
            <person name="Ricklefs S.M."/>
            <person name="Porcella S.F."/>
            <person name="Parkins L.D."/>
            <person name="Beres S.B."/>
            <person name="Campbell D.S."/>
            <person name="Smith T.M."/>
            <person name="Zhang Q."/>
            <person name="Kapur V."/>
            <person name="Daly J.A."/>
            <person name="Veasy L.G."/>
            <person name="Musser J.M."/>
        </authorList>
    </citation>
    <scope>NUCLEOTIDE SEQUENCE [LARGE SCALE GENOMIC DNA]</scope>
    <source>
        <strain>MGAS8232</strain>
    </source>
</reference>
<gene>
    <name evidence="1" type="primary">rpmH</name>
    <name type="ordered locus">spyM18_0232</name>
</gene>
<accession>P66260</accession>
<accession>Q9A1J1</accession>